<sequence>MSDTASWQPSAPIANLLKRAAIMAEIRRFFADRGVLEVETPTMSQATVTDIHLVPFETRFVGPGAADGLTLYMMTSPEYHMKRLLAAGSGPIYQLGRSFRNEEAGRYHNPEFTMLEWYRPHYDMYRLMNEVDDLLQQILDCNSAETLSYQQAFLRHLNIDPLSAEKAQLREVAAKLDLSNIADTEEDRDTLLQLLFTVGVEPYIGRDKPAFIYHFPASQASLAEISTEDHRVAERFEVYFKGIELANGFRELTDGDEQLQRFEQDNRNRAKRGLPQNPIDMNLIAALKQGLPDCSGVALGVDRLVMLALNAERLSDVIAFPVNIA</sequence>
<protein>
    <recommendedName>
        <fullName evidence="1">Elongation factor P--(R)-beta-lysine ligase</fullName>
        <shortName evidence="1">EF-P--(R)-beta-lysine ligase</shortName>
        <ecNumber evidence="1">6.3.2.-</ecNumber>
    </recommendedName>
    <alternativeName>
        <fullName evidence="1">EF-P post-translational modification enzyme A</fullName>
    </alternativeName>
    <alternativeName>
        <fullName evidence="1">EF-P-lysine lysyltransferase</fullName>
    </alternativeName>
</protein>
<accession>A4TRQ1</accession>
<name>EPMA_YERPP</name>
<comment type="function">
    <text evidence="1">With EpmB is involved in the beta-lysylation step of the post-translational modification of translation elongation factor P (EF-P). Catalyzes the ATP-dependent activation of (R)-beta-lysine produced by EpmB, forming a lysyl-adenylate, from which the beta-lysyl moiety is then transferred to the epsilon-amino group of a conserved specific lysine residue in EF-P.</text>
</comment>
<comment type="catalytic activity">
    <reaction evidence="1">
        <text>D-beta-lysine + L-lysyl-[protein] + ATP = N(6)-((3R)-3,6-diaminohexanoyl)-L-lysyl-[protein] + AMP + diphosphate + H(+)</text>
        <dbReference type="Rhea" id="RHEA:83435"/>
        <dbReference type="Rhea" id="RHEA-COMP:9752"/>
        <dbReference type="Rhea" id="RHEA-COMP:20131"/>
        <dbReference type="ChEBI" id="CHEBI:15378"/>
        <dbReference type="ChEBI" id="CHEBI:29969"/>
        <dbReference type="ChEBI" id="CHEBI:30616"/>
        <dbReference type="ChEBI" id="CHEBI:33019"/>
        <dbReference type="ChEBI" id="CHEBI:84138"/>
        <dbReference type="ChEBI" id="CHEBI:156053"/>
        <dbReference type="ChEBI" id="CHEBI:456215"/>
    </reaction>
    <physiologicalReaction direction="left-to-right" evidence="1">
        <dbReference type="Rhea" id="RHEA:83436"/>
    </physiologicalReaction>
</comment>
<comment type="subunit">
    <text evidence="1">Homodimer.</text>
</comment>
<comment type="similarity">
    <text evidence="1">Belongs to the class-II aminoacyl-tRNA synthetase family. EpmA subfamily.</text>
</comment>
<feature type="chain" id="PRO_1000023637" description="Elongation factor P--(R)-beta-lysine ligase">
    <location>
        <begin position="1"/>
        <end position="325"/>
    </location>
</feature>
<feature type="binding site" evidence="1">
    <location>
        <begin position="76"/>
        <end position="78"/>
    </location>
    <ligand>
        <name>substrate</name>
    </ligand>
</feature>
<feature type="binding site" evidence="1">
    <location>
        <begin position="100"/>
        <end position="102"/>
    </location>
    <ligand>
        <name>ATP</name>
        <dbReference type="ChEBI" id="CHEBI:30616"/>
    </ligand>
</feature>
<feature type="binding site" evidence="1">
    <location>
        <position position="109"/>
    </location>
    <ligand>
        <name>ATP</name>
        <dbReference type="ChEBI" id="CHEBI:30616"/>
    </ligand>
</feature>
<feature type="binding site" evidence="1">
    <location>
        <position position="118"/>
    </location>
    <ligand>
        <name>substrate</name>
    </ligand>
</feature>
<feature type="binding site" evidence="1">
    <location>
        <begin position="244"/>
        <end position="245"/>
    </location>
    <ligand>
        <name>ATP</name>
        <dbReference type="ChEBI" id="CHEBI:30616"/>
    </ligand>
</feature>
<feature type="binding site" evidence="1">
    <location>
        <position position="251"/>
    </location>
    <ligand>
        <name>substrate</name>
    </ligand>
</feature>
<feature type="binding site" evidence="1">
    <location>
        <position position="300"/>
    </location>
    <ligand>
        <name>ATP</name>
        <dbReference type="ChEBI" id="CHEBI:30616"/>
    </ligand>
</feature>
<keyword id="KW-0067">ATP-binding</keyword>
<keyword id="KW-0436">Ligase</keyword>
<keyword id="KW-0547">Nucleotide-binding</keyword>
<dbReference type="EC" id="6.3.2.-" evidence="1"/>
<dbReference type="EMBL" id="CP000668">
    <property type="protein sequence ID" value="ABP41963.1"/>
    <property type="molecule type" value="Genomic_DNA"/>
</dbReference>
<dbReference type="RefSeq" id="WP_002209139.1">
    <property type="nucleotide sequence ID" value="NZ_CP009715.1"/>
</dbReference>
<dbReference type="SMR" id="A4TRQ1"/>
<dbReference type="GeneID" id="57974246"/>
<dbReference type="KEGG" id="ypp:YPDSF_3613"/>
<dbReference type="PATRIC" id="fig|386656.14.peg.272"/>
<dbReference type="GO" id="GO:0005829">
    <property type="term" value="C:cytosol"/>
    <property type="evidence" value="ECO:0007669"/>
    <property type="project" value="TreeGrafter"/>
</dbReference>
<dbReference type="GO" id="GO:0016880">
    <property type="term" value="F:acid-ammonia (or amide) ligase activity"/>
    <property type="evidence" value="ECO:0007669"/>
    <property type="project" value="UniProtKB-UniRule"/>
</dbReference>
<dbReference type="GO" id="GO:0005524">
    <property type="term" value="F:ATP binding"/>
    <property type="evidence" value="ECO:0007669"/>
    <property type="project" value="UniProtKB-UniRule"/>
</dbReference>
<dbReference type="GO" id="GO:0004824">
    <property type="term" value="F:lysine-tRNA ligase activity"/>
    <property type="evidence" value="ECO:0007669"/>
    <property type="project" value="InterPro"/>
</dbReference>
<dbReference type="GO" id="GO:0000049">
    <property type="term" value="F:tRNA binding"/>
    <property type="evidence" value="ECO:0007669"/>
    <property type="project" value="TreeGrafter"/>
</dbReference>
<dbReference type="GO" id="GO:0006430">
    <property type="term" value="P:lysyl-tRNA aminoacylation"/>
    <property type="evidence" value="ECO:0007669"/>
    <property type="project" value="InterPro"/>
</dbReference>
<dbReference type="FunFam" id="3.30.930.10:FF:000017">
    <property type="entry name" value="Elongation factor P--(R)-beta-lysine ligase"/>
    <property type="match status" value="1"/>
</dbReference>
<dbReference type="Gene3D" id="3.30.930.10">
    <property type="entry name" value="Bira Bifunctional Protein, Domain 2"/>
    <property type="match status" value="1"/>
</dbReference>
<dbReference type="HAMAP" id="MF_00174">
    <property type="entry name" value="EF_P_modif_A"/>
    <property type="match status" value="1"/>
</dbReference>
<dbReference type="InterPro" id="IPR004364">
    <property type="entry name" value="Aa-tRNA-synt_II"/>
</dbReference>
<dbReference type="InterPro" id="IPR006195">
    <property type="entry name" value="aa-tRNA-synth_II"/>
</dbReference>
<dbReference type="InterPro" id="IPR045864">
    <property type="entry name" value="aa-tRNA-synth_II/BPL/LPL"/>
</dbReference>
<dbReference type="InterPro" id="IPR004525">
    <property type="entry name" value="EpmA"/>
</dbReference>
<dbReference type="InterPro" id="IPR018149">
    <property type="entry name" value="Lys-tRNA-synth_II_C"/>
</dbReference>
<dbReference type="NCBIfam" id="TIGR00462">
    <property type="entry name" value="genX"/>
    <property type="match status" value="1"/>
</dbReference>
<dbReference type="NCBIfam" id="NF006828">
    <property type="entry name" value="PRK09350.1"/>
    <property type="match status" value="1"/>
</dbReference>
<dbReference type="PANTHER" id="PTHR42918:SF6">
    <property type="entry name" value="ELONGATION FACTOR P--(R)-BETA-LYSINE LIGASE"/>
    <property type="match status" value="1"/>
</dbReference>
<dbReference type="PANTHER" id="PTHR42918">
    <property type="entry name" value="LYSYL-TRNA SYNTHETASE"/>
    <property type="match status" value="1"/>
</dbReference>
<dbReference type="Pfam" id="PF00152">
    <property type="entry name" value="tRNA-synt_2"/>
    <property type="match status" value="1"/>
</dbReference>
<dbReference type="PRINTS" id="PR00982">
    <property type="entry name" value="TRNASYNTHLYS"/>
</dbReference>
<dbReference type="SUPFAM" id="SSF55681">
    <property type="entry name" value="Class II aaRS and biotin synthetases"/>
    <property type="match status" value="1"/>
</dbReference>
<dbReference type="PROSITE" id="PS50862">
    <property type="entry name" value="AA_TRNA_LIGASE_II"/>
    <property type="match status" value="1"/>
</dbReference>
<gene>
    <name evidence="1" type="primary">epmA</name>
    <name type="synonym">yjeA</name>
    <name type="ordered locus">YPDSF_3613</name>
</gene>
<organism>
    <name type="scientific">Yersinia pestis (strain Pestoides F)</name>
    <dbReference type="NCBI Taxonomy" id="386656"/>
    <lineage>
        <taxon>Bacteria</taxon>
        <taxon>Pseudomonadati</taxon>
        <taxon>Pseudomonadota</taxon>
        <taxon>Gammaproteobacteria</taxon>
        <taxon>Enterobacterales</taxon>
        <taxon>Yersiniaceae</taxon>
        <taxon>Yersinia</taxon>
    </lineage>
</organism>
<proteinExistence type="inferred from homology"/>
<reference key="1">
    <citation type="submission" date="2007-02" db="EMBL/GenBank/DDBJ databases">
        <title>Complete sequence of chromosome of Yersinia pestis Pestoides F.</title>
        <authorList>
            <consortium name="US DOE Joint Genome Institute"/>
            <person name="Copeland A."/>
            <person name="Lucas S."/>
            <person name="Lapidus A."/>
            <person name="Barry K."/>
            <person name="Detter J.C."/>
            <person name="Glavina del Rio T."/>
            <person name="Hammon N."/>
            <person name="Israni S."/>
            <person name="Dalin E."/>
            <person name="Tice H."/>
            <person name="Pitluck S."/>
            <person name="Di Bartolo G."/>
            <person name="Chain P."/>
            <person name="Malfatti S."/>
            <person name="Shin M."/>
            <person name="Vergez L."/>
            <person name="Schmutz J."/>
            <person name="Larimer F."/>
            <person name="Land M."/>
            <person name="Hauser L."/>
            <person name="Worsham P."/>
            <person name="Chu M."/>
            <person name="Bearden S."/>
            <person name="Garcia E."/>
            <person name="Richardson P."/>
        </authorList>
    </citation>
    <scope>NUCLEOTIDE SEQUENCE [LARGE SCALE GENOMIC DNA]</scope>
    <source>
        <strain>Pestoides F</strain>
    </source>
</reference>
<evidence type="ECO:0000255" key="1">
    <source>
        <dbReference type="HAMAP-Rule" id="MF_00174"/>
    </source>
</evidence>